<evidence type="ECO:0000250" key="1">
    <source>
        <dbReference type="UniProtKB" id="P03680"/>
    </source>
</evidence>
<evidence type="ECO:0000305" key="2"/>
<organism>
    <name type="scientific">Bacillus phage M2</name>
    <name type="common">Bacteriophage M2</name>
    <dbReference type="NCBI Taxonomy" id="331976"/>
    <lineage>
        <taxon>Viruses</taxon>
        <taxon>Duplodnaviria</taxon>
        <taxon>Heunggongvirae</taxon>
        <taxon>Uroviricota</taxon>
        <taxon>Caudoviricetes</taxon>
        <taxon>Salasmaviridae</taxon>
        <taxon>Picovirinae</taxon>
        <taxon>Salasvirus</taxon>
    </lineage>
</organism>
<sequence length="572" mass="66423">MSRKMFSCDFETTTKLDDCRVWAYGYMEIGNLDNYKIGNSLDEFMQWVMEIQADLYFHNLKFDGAFIVNWLEQHGFKWSNEGLPNTYNTIISKMGQWYMIDICFGYKGKRKLHTVIYDSLKKLPFPVKKIAKDFQLPLLKGDIDYHTERPVGHEITPEEYEYIKNDIEIIARALDIQFKQGLDRMTAGSDSLKGFKDILSTKKFNKVFPKLSLPMDKEIRKAYRGGFTWLNDKYKEKEIGEGMVFDVNSLYPSQMYSRPLPYGAPIVFQGKYEKDEQYPLYIQRIRFEFELKEGYIPTIQIKKNPFFKGNEYLKNSGVEPVELYLTNVDLELIQEHYELYNVEYIDGFKFREKTGLFKDFIDKWTYVKTHEEGAKKQLAKLMLNSLYGKFASNPDVTGKVPYLKDDGSLGFRVGDEEYKDPVYTPMGVFITAWARFTTITAAQACYDRIIYCDTDSIHLTGTEVPEIIKDIVDPKKLGYWAHESTFKRAKYLRQKTYIQDIYVKEVDGKLKECSPDEATTTKFSVKCAGMTDTIKKKVTFDNFAVGFSSMGKPKPVQVNGGVVLVDSVFTIK</sequence>
<accession>P19894</accession>
<feature type="chain" id="PRO_0000046544" description="DNA polymerase">
    <location>
        <begin position="1"/>
        <end position="572"/>
    </location>
</feature>
<feature type="region of interest" description="3'-5' exonuclease and strand displacement activities" evidence="1">
    <location>
        <begin position="1"/>
        <end position="222"/>
    </location>
</feature>
<feature type="region of interest" description="Interaction with the primer terminal protein" evidence="1">
    <location>
        <begin position="56"/>
        <end position="66"/>
    </location>
</feature>
<feature type="region of interest" description="DNA-binding; Involved in the formation of a stable complex between TP and phi29 DNA polymerase" evidence="1">
    <location>
        <begin position="223"/>
        <end position="226"/>
    </location>
</feature>
<feature type="region of interest" description="Initiation, polymerization and pyrophosphorolytic activities" evidence="1">
    <location>
        <begin position="227"/>
        <end position="572"/>
    </location>
</feature>
<feature type="binding site" evidence="1">
    <location>
        <position position="142"/>
    </location>
    <ligand>
        <name>Mg(2+)</name>
        <dbReference type="ChEBI" id="CHEBI:18420"/>
        <label>1</label>
    </ligand>
</feature>
<feature type="binding site" evidence="1">
    <location>
        <position position="166"/>
    </location>
    <ligand>
        <name>Mg(2+)</name>
        <dbReference type="ChEBI" id="CHEBI:18420"/>
        <label>1</label>
    </ligand>
</feature>
<feature type="binding site" evidence="1">
    <location>
        <position position="246"/>
    </location>
    <ligand>
        <name>Mg(2+)</name>
        <dbReference type="ChEBI" id="CHEBI:18420"/>
        <label>2</label>
        <note>catalytic</note>
    </ligand>
</feature>
<feature type="binding site" evidence="1">
    <location>
        <position position="247"/>
    </location>
    <ligand>
        <name>Mg(2+)</name>
        <dbReference type="ChEBI" id="CHEBI:18420"/>
        <label>2</label>
        <note>catalytic</note>
    </ligand>
</feature>
<feature type="binding site" evidence="1">
    <location>
        <position position="251"/>
    </location>
    <ligand>
        <name>5-methyl-UTP</name>
        <dbReference type="ChEBI" id="CHEBI:63527"/>
    </ligand>
</feature>
<feature type="binding site" evidence="1">
    <location>
        <position position="368"/>
    </location>
    <ligand>
        <name>5-methyl-UTP</name>
        <dbReference type="ChEBI" id="CHEBI:63527"/>
    </ligand>
</feature>
<feature type="binding site" evidence="1">
    <location>
        <position position="380"/>
    </location>
    <ligand>
        <name>5-methyl-UTP</name>
        <dbReference type="ChEBI" id="CHEBI:63527"/>
    </ligand>
</feature>
<feature type="binding site" evidence="1">
    <location>
        <position position="453"/>
    </location>
    <ligand>
        <name>Mg(2+)</name>
        <dbReference type="ChEBI" id="CHEBI:18420"/>
        <label>2</label>
        <note>catalytic</note>
    </ligand>
</feature>
<feature type="binding site" evidence="1">
    <location>
        <position position="455"/>
    </location>
    <ligand>
        <name>5-methyl-UTP</name>
        <dbReference type="ChEBI" id="CHEBI:63527"/>
    </ligand>
</feature>
<feature type="binding site" evidence="1">
    <location>
        <position position="455"/>
    </location>
    <ligand>
        <name>Mg(2+)</name>
        <dbReference type="ChEBI" id="CHEBI:18420"/>
        <label>2</label>
        <note>catalytic</note>
    </ligand>
</feature>
<feature type="site" description="Essential for 3'-5' exonucleolysis" evidence="1">
    <location>
        <position position="9"/>
    </location>
</feature>
<feature type="site" description="Essential for 3'-5' exonucleolysis" evidence="1">
    <location>
        <position position="11"/>
    </location>
</feature>
<feature type="site" description="Essential for 3'-5' exonucleolysis" evidence="1">
    <location>
        <position position="62"/>
    </location>
</feature>
<feature type="site" description="Involved in binding template-primer structures" evidence="1">
    <location>
        <position position="90"/>
    </location>
</feature>
<feature type="site" description="Critical for 3'-5' exonucleolysis" evidence="1">
    <location>
        <position position="119"/>
    </location>
</feature>
<feature type="site" description="Essential for 3'-5' exonucleolysis" evidence="1">
    <location>
        <position position="119"/>
    </location>
</feature>
<feature type="site" description="Essential for 3'-5' exonucleolysis" evidence="1">
    <location>
        <position position="120"/>
    </location>
</feature>
<feature type="site" description="Probably involved in binding template-primer structures" evidence="1">
    <location>
        <position position="249"/>
    </location>
</feature>
<feature type="site" description="Probably involved in nucleotide binding selection" evidence="1">
    <location>
        <position position="251"/>
    </location>
</feature>
<feature type="site" description="Probably involved in nucleotide binding selection" evidence="1">
    <location>
        <position position="380"/>
    </location>
</feature>
<feature type="site" description="Probably involved in binding template-primer structures" evidence="1">
    <location>
        <position position="384"/>
    </location>
</feature>
<feature type="site" description="Probably involved in nucleotide binding selection" evidence="1">
    <location>
        <position position="387"/>
    </location>
</feature>
<feature type="site" description="Probably involved in binding template-primer structures" evidence="1">
    <location>
        <position position="388"/>
    </location>
</feature>
<feature type="site" description="Probably involved in binding template-primer structures" evidence="1">
    <location>
        <position position="431"/>
    </location>
</feature>
<feature type="site" description="Probably involved in binding template-primer structures" evidence="1">
    <location>
        <position position="435"/>
    </location>
</feature>
<feature type="site" description="Probably involved in binding template-primer structures" evidence="1">
    <location>
        <position position="495"/>
    </location>
</feature>
<feature type="site" description="Probably involved in binding template-primer structures" evidence="1">
    <location>
        <position position="497"/>
    </location>
</feature>
<feature type="site" description="Stabilizes the primer-terminus at the polymerization active site and contributes to the coordination between the exonuclease and polymerazation activities" evidence="1">
    <location>
        <position position="526"/>
    </location>
</feature>
<feature type="sequence variant" description="In mutant APH(2).">
    <original>L</original>
    <variation>F</variation>
    <location>
        <position position="192"/>
    </location>
</feature>
<reference key="1">
    <citation type="journal article" date="1989" name="Gene">
        <title>Primary structure of bacteriophage M2 DNA polymerase: conserved segments within protein-priming DNA polymerases and DNA polymerase I of Escherichia coli.</title>
        <authorList>
            <person name="Matsumoto K."/>
            <person name="Takano H."/>
            <person name="Kim C.I."/>
            <person name="Hirokawa H."/>
        </authorList>
    </citation>
    <scope>NUCLEOTIDE SEQUENCE [GENOMIC DNA]</scope>
</reference>
<comment type="function">
    <text evidence="1">Polymerase responsible for protein-primed viral DNA replication by strand displacement with high processivity and fidelity. To start replication, the DNA polymerase forms a heterodimer with a free primer terminal protein (TP), recognizes the replication origins at both 5' ends of the linear chromosome, and initiates replication using as primer the OH-group of Ser-232 of the TP. This polymerase possesses three enzymatic activities: DNA synthesis (polymerase), primer terminal protein (TP) deoxynucleotidylation, which is the formation of a covalent linkage (phosphoester) between the hydroxyl group of a specific serine residue in TP and 5'-dAMP, a reaction directed by the second T at the 3' end, and 3' to 5' exonuclease activity. Exonuclease activity has a proofreading purpose.</text>
</comment>
<comment type="catalytic activity">
    <reaction evidence="1">
        <text>DNA(n) + a 2'-deoxyribonucleoside 5'-triphosphate = DNA(n+1) + diphosphate</text>
        <dbReference type="Rhea" id="RHEA:22508"/>
        <dbReference type="Rhea" id="RHEA-COMP:17339"/>
        <dbReference type="Rhea" id="RHEA-COMP:17340"/>
        <dbReference type="ChEBI" id="CHEBI:33019"/>
        <dbReference type="ChEBI" id="CHEBI:61560"/>
        <dbReference type="ChEBI" id="CHEBI:173112"/>
        <dbReference type="EC" id="2.7.7.7"/>
    </reaction>
</comment>
<comment type="cofactor">
    <cofactor evidence="1">
        <name>Mg(2+)</name>
        <dbReference type="ChEBI" id="CHEBI:18420"/>
    </cofactor>
</comment>
<comment type="subunit">
    <text evidence="1">Interacts with the primer terminal protein; this interaction allows the initiation of TP-primed DNA replication at both viral DNA ends. Interacts with DNA.</text>
</comment>
<comment type="domain">
    <text evidence="1">The N-terminus contains the 3'-5' exonuclease activity and strand displacement ability. The C-terminus contains the protein-primed initiation, DNA polymerization and pyrophosphorolytic activities.</text>
</comment>
<comment type="miscellaneous">
    <text evidence="1">This DNA polymerase requires a protein as a primer.</text>
</comment>
<comment type="similarity">
    <text evidence="2">Belongs to the DNA polymerase type-B family.</text>
</comment>
<organismHost>
    <name type="scientific">Bacillus</name>
    <dbReference type="NCBI Taxonomy" id="1386"/>
</organismHost>
<name>DPOL_BPM2</name>
<gene>
    <name type="primary">G</name>
</gene>
<dbReference type="EC" id="2.7.7.7" evidence="1"/>
<dbReference type="EC" id="3.1.11.-" evidence="1"/>
<dbReference type="EMBL" id="M33144">
    <property type="protein sequence ID" value="AAA32368.1"/>
    <property type="molecule type" value="Genomic_DNA"/>
</dbReference>
<dbReference type="PIR" id="JQ0161">
    <property type="entry name" value="JQ0161"/>
</dbReference>
<dbReference type="SMR" id="P19894"/>
<dbReference type="GO" id="GO:0003677">
    <property type="term" value="F:DNA binding"/>
    <property type="evidence" value="ECO:0007669"/>
    <property type="project" value="UniProtKB-KW"/>
</dbReference>
<dbReference type="GO" id="GO:0003887">
    <property type="term" value="F:DNA-directed DNA polymerase activity"/>
    <property type="evidence" value="ECO:0007669"/>
    <property type="project" value="UniProtKB-KW"/>
</dbReference>
<dbReference type="GO" id="GO:0004527">
    <property type="term" value="F:exonuclease activity"/>
    <property type="evidence" value="ECO:0007669"/>
    <property type="project" value="UniProtKB-KW"/>
</dbReference>
<dbReference type="GO" id="GO:0046872">
    <property type="term" value="F:metal ion binding"/>
    <property type="evidence" value="ECO:0007669"/>
    <property type="project" value="UniProtKB-KW"/>
</dbReference>
<dbReference type="GO" id="GO:0001882">
    <property type="term" value="F:nucleoside binding"/>
    <property type="evidence" value="ECO:0007669"/>
    <property type="project" value="InterPro"/>
</dbReference>
<dbReference type="GO" id="GO:0000166">
    <property type="term" value="F:nucleotide binding"/>
    <property type="evidence" value="ECO:0007669"/>
    <property type="project" value="UniProtKB-KW"/>
</dbReference>
<dbReference type="GO" id="GO:0006260">
    <property type="term" value="P:DNA replication"/>
    <property type="evidence" value="ECO:0007669"/>
    <property type="project" value="UniProtKB-KW"/>
</dbReference>
<dbReference type="GO" id="GO:0039693">
    <property type="term" value="P:viral DNA genome replication"/>
    <property type="evidence" value="ECO:0007669"/>
    <property type="project" value="UniProtKB-KW"/>
</dbReference>
<dbReference type="Gene3D" id="4.10.80.20">
    <property type="entry name" value="DNA polymerase, domain 5"/>
    <property type="match status" value="1"/>
</dbReference>
<dbReference type="Gene3D" id="4.10.80.30">
    <property type="entry name" value="DNA polymerase, domain 6"/>
    <property type="match status" value="1"/>
</dbReference>
<dbReference type="Gene3D" id="1.10.287.690">
    <property type="entry name" value="Helix hairpin bin"/>
    <property type="match status" value="1"/>
</dbReference>
<dbReference type="Gene3D" id="3.90.1600.10">
    <property type="entry name" value="Palm domain of DNA polymerase"/>
    <property type="match status" value="1"/>
</dbReference>
<dbReference type="Gene3D" id="3.30.420.10">
    <property type="entry name" value="Ribonuclease H-like superfamily/Ribonuclease H"/>
    <property type="match status" value="1"/>
</dbReference>
<dbReference type="Gene3D" id="3.30.1770.10">
    <property type="entry name" value="TPR 1 domain of DNA polymerase"/>
    <property type="match status" value="1"/>
</dbReference>
<dbReference type="InterPro" id="IPR006172">
    <property type="entry name" value="DNA-dir_DNA_pol_B"/>
</dbReference>
<dbReference type="InterPro" id="IPR017964">
    <property type="entry name" value="DNA-dir_DNA_pol_B_CS"/>
</dbReference>
<dbReference type="InterPro" id="IPR004868">
    <property type="entry name" value="DNA-dir_DNA_pol_B_mt/vir"/>
</dbReference>
<dbReference type="InterPro" id="IPR014416">
    <property type="entry name" value="DNA-dir_DNA_polB_phi29_vir"/>
</dbReference>
<dbReference type="InterPro" id="IPR043502">
    <property type="entry name" value="DNA/RNA_pol_sf"/>
</dbReference>
<dbReference type="InterPro" id="IPR023211">
    <property type="entry name" value="DNA_pol_palm_dom_sf"/>
</dbReference>
<dbReference type="InterPro" id="IPR012337">
    <property type="entry name" value="RNaseH-like_sf"/>
</dbReference>
<dbReference type="InterPro" id="IPR036397">
    <property type="entry name" value="RNaseH_sf"/>
</dbReference>
<dbReference type="PANTHER" id="PTHR33568">
    <property type="entry name" value="DNA POLYMERASE"/>
    <property type="match status" value="1"/>
</dbReference>
<dbReference type="PANTHER" id="PTHR33568:SF3">
    <property type="entry name" value="DNA-DIRECTED DNA POLYMERASE"/>
    <property type="match status" value="1"/>
</dbReference>
<dbReference type="Pfam" id="PF03175">
    <property type="entry name" value="DNA_pol_B_2"/>
    <property type="match status" value="1"/>
</dbReference>
<dbReference type="PIRSF" id="PIRSF004178">
    <property type="entry name" value="Dpol_Bac_phage"/>
    <property type="match status" value="1"/>
</dbReference>
<dbReference type="PRINTS" id="PR00106">
    <property type="entry name" value="DNAPOLB"/>
</dbReference>
<dbReference type="SMART" id="SM00486">
    <property type="entry name" value="POLBc"/>
    <property type="match status" value="1"/>
</dbReference>
<dbReference type="SUPFAM" id="SSF56672">
    <property type="entry name" value="DNA/RNA polymerases"/>
    <property type="match status" value="1"/>
</dbReference>
<dbReference type="SUPFAM" id="SSF53098">
    <property type="entry name" value="Ribonuclease H-like"/>
    <property type="match status" value="1"/>
</dbReference>
<dbReference type="PROSITE" id="PS00116">
    <property type="entry name" value="DNA_POLYMERASE_B"/>
    <property type="match status" value="1"/>
</dbReference>
<protein>
    <recommendedName>
        <fullName>DNA polymerase</fullName>
        <ecNumber evidence="1">2.7.7.7</ecNumber>
        <ecNumber evidence="1">3.1.11.-</ecNumber>
    </recommendedName>
    <alternativeName>
        <fullName evidence="2">Gene product 2</fullName>
        <shortName evidence="2">gp2</shortName>
    </alternativeName>
    <alternativeName>
        <fullName>Protein p2</fullName>
    </alternativeName>
</protein>
<keyword id="KW-0235">DNA replication</keyword>
<keyword id="KW-0238">DNA-binding</keyword>
<keyword id="KW-0239">DNA-directed DNA polymerase</keyword>
<keyword id="KW-0244">Early protein</keyword>
<keyword id="KW-0269">Exonuclease</keyword>
<keyword id="KW-0378">Hydrolase</keyword>
<keyword id="KW-0460">Magnesium</keyword>
<keyword id="KW-0479">Metal-binding</keyword>
<keyword id="KW-0540">Nuclease</keyword>
<keyword id="KW-0547">Nucleotide-binding</keyword>
<keyword id="KW-0548">Nucleotidyltransferase</keyword>
<keyword id="KW-0808">Transferase</keyword>
<keyword id="KW-1194">Viral DNA replication</keyword>
<proteinExistence type="inferred from homology"/>